<keyword id="KW-0325">Glycoprotein</keyword>
<keyword id="KW-0732">Signal</keyword>
<name>ESG1_TRYBB</name>
<reference key="1">
    <citation type="journal article" date="1985" name="Cell">
        <title>Coordinate transcription of variant surface glycoprotein genes and an expression site associated gene family in Trypanosoma brucei.</title>
        <authorList>
            <person name="Cully D.F."/>
            <person name="Ip H.S."/>
            <person name="Cross G.A.M."/>
        </authorList>
    </citation>
    <scope>NUCLEOTIDE SEQUENCE [MRNA]</scope>
</reference>
<feature type="signal peptide">
    <location>
        <begin position="1"/>
        <end position="23"/>
    </location>
</feature>
<feature type="chain" id="PRO_0000021204" description="VSG expression site-associated protein 117A">
    <location>
        <begin position="24"/>
        <end position="325"/>
    </location>
</feature>
<feature type="glycosylation site" description="N-linked (GlcNAc...) asparagine" evidence="1">
    <location>
        <position position="72"/>
    </location>
</feature>
<feature type="glycosylation site" description="N-linked (GlcNAc...) asparagine" evidence="1">
    <location>
        <position position="290"/>
    </location>
</feature>
<feature type="glycosylation site" description="N-linked (GlcNAc...) asparagine" evidence="1">
    <location>
        <position position="313"/>
    </location>
</feature>
<proteinExistence type="evidence at transcript level"/>
<comment type="function">
    <text>Not known but may be related to activation of the variant surface glycoprotein genes.</text>
</comment>
<evidence type="ECO:0000255" key="1"/>
<sequence length="325" mass="35993">MKVTIVELVVWLFSVNFFVVVAEESRWTLVDDHYGKNLHESVCYLRCLSNALNKLYSEGERRLFVNEEVYANASRILDDMEGKTGESTTYLSVVSSEMGGENNKLEKLISYGNAMGDLVAKVGGLFAEVNESVRAVREEIPSALIRANKYYTAIAEITRTVWDDVNRPLQQDKATCGDQKVTGVGELKTECGAHTCPLSDGVNESALQKYKGGCLEINVMSGSVSECFNLPRNKLYRSVALSSSHGFLKWYQDEAKRFQLGLRVKNIFGPLIASFGVGQPPSVLAEMINNITSLQSRFNEVHSNFTSILLADNLTADVDNTDSTI</sequence>
<accession>P04477</accession>
<protein>
    <recommendedName>
        <fullName>VSG expression site-associated protein 117A</fullName>
    </recommendedName>
    <alternativeName>
        <fullName>ESAG protein</fullName>
    </alternativeName>
</protein>
<organism>
    <name type="scientific">Trypanosoma brucei brucei</name>
    <dbReference type="NCBI Taxonomy" id="5702"/>
    <lineage>
        <taxon>Eukaryota</taxon>
        <taxon>Discoba</taxon>
        <taxon>Euglenozoa</taxon>
        <taxon>Kinetoplastea</taxon>
        <taxon>Metakinetoplastina</taxon>
        <taxon>Trypanosomatida</taxon>
        <taxon>Trypanosomatidae</taxon>
        <taxon>Trypanosoma</taxon>
    </lineage>
</organism>
<dbReference type="EMBL" id="M11451">
    <property type="protein sequence ID" value="AAA30190.1"/>
    <property type="molecule type" value="mRNA"/>
</dbReference>
<dbReference type="PIR" id="A03394">
    <property type="entry name" value="VMUT17"/>
</dbReference>
<dbReference type="InterPro" id="IPR004922">
    <property type="entry name" value="ESAG"/>
</dbReference>
<dbReference type="Pfam" id="PF03238">
    <property type="entry name" value="ESAG1"/>
    <property type="match status" value="1"/>
</dbReference>